<proteinExistence type="inferred from homology"/>
<accession>Q6GHD2</accession>
<protein>
    <recommendedName>
        <fullName evidence="1">tRNA dimethylallyltransferase</fullName>
        <ecNumber evidence="1">2.5.1.75</ecNumber>
    </recommendedName>
    <alternativeName>
        <fullName evidence="1">Dimethylallyl diphosphate:tRNA dimethylallyltransferase</fullName>
        <shortName evidence="1">DMAPP:tRNA dimethylallyltransferase</shortName>
        <shortName evidence="1">DMATase</shortName>
    </alternativeName>
    <alternativeName>
        <fullName evidence="1">Isopentenyl-diphosphate:tRNA isopentenyltransferase</fullName>
        <shortName evidence="1">IPP transferase</shortName>
        <shortName evidence="1">IPPT</shortName>
        <shortName evidence="1">IPTase</shortName>
    </alternativeName>
</protein>
<sequence length="311" mass="35873">MNKNKPFIVVIVGPTASGKTELSIELAKRINGEIISGDSMQVYKHMNIGTAKVTPEEMDGIPHHLIGILNPDDTFSAYEFKRLAEDLITDITNRGKVPIIAGGTGLYIQSLIYNYELEDETVTPAQLSVVKQKLSALEHLDNQQLHEYLAQFDEASAKNIHPNNRQRVLRAIEYYFKTKKLLSNRKKVQQFTENYDTLLIGIEMSRKTLYSRINKRVDIMLDHGLFREVQQLVEQGYESCQSMQAIGYKELIPVINGQMIYEDAVNDLKQHSRQYAKRQMTWFKNKMSVHWLDKENMSLQMMLDEITTQIK</sequence>
<dbReference type="EC" id="2.5.1.75" evidence="1"/>
<dbReference type="EMBL" id="BX571856">
    <property type="protein sequence ID" value="CAG40281.1"/>
    <property type="molecule type" value="Genomic_DNA"/>
</dbReference>
<dbReference type="RefSeq" id="WP_001574397.1">
    <property type="nucleotide sequence ID" value="NC_002952.2"/>
</dbReference>
<dbReference type="SMR" id="Q6GHD2"/>
<dbReference type="KEGG" id="sar:SAR1278"/>
<dbReference type="HOGENOM" id="CLU_032616_0_1_9"/>
<dbReference type="Proteomes" id="UP000000596">
    <property type="component" value="Chromosome"/>
</dbReference>
<dbReference type="GO" id="GO:0005524">
    <property type="term" value="F:ATP binding"/>
    <property type="evidence" value="ECO:0007669"/>
    <property type="project" value="UniProtKB-UniRule"/>
</dbReference>
<dbReference type="GO" id="GO:0052381">
    <property type="term" value="F:tRNA dimethylallyltransferase activity"/>
    <property type="evidence" value="ECO:0007669"/>
    <property type="project" value="UniProtKB-UniRule"/>
</dbReference>
<dbReference type="GO" id="GO:0006400">
    <property type="term" value="P:tRNA modification"/>
    <property type="evidence" value="ECO:0007669"/>
    <property type="project" value="TreeGrafter"/>
</dbReference>
<dbReference type="Gene3D" id="1.10.20.140">
    <property type="match status" value="1"/>
</dbReference>
<dbReference type="Gene3D" id="3.40.50.300">
    <property type="entry name" value="P-loop containing nucleotide triphosphate hydrolases"/>
    <property type="match status" value="1"/>
</dbReference>
<dbReference type="HAMAP" id="MF_00185">
    <property type="entry name" value="IPP_trans"/>
    <property type="match status" value="1"/>
</dbReference>
<dbReference type="InterPro" id="IPR039657">
    <property type="entry name" value="Dimethylallyltransferase"/>
</dbReference>
<dbReference type="InterPro" id="IPR018022">
    <property type="entry name" value="IPT"/>
</dbReference>
<dbReference type="InterPro" id="IPR027417">
    <property type="entry name" value="P-loop_NTPase"/>
</dbReference>
<dbReference type="NCBIfam" id="TIGR00174">
    <property type="entry name" value="miaA"/>
    <property type="match status" value="1"/>
</dbReference>
<dbReference type="PANTHER" id="PTHR11088">
    <property type="entry name" value="TRNA DIMETHYLALLYLTRANSFERASE"/>
    <property type="match status" value="1"/>
</dbReference>
<dbReference type="PANTHER" id="PTHR11088:SF60">
    <property type="entry name" value="TRNA DIMETHYLALLYLTRANSFERASE"/>
    <property type="match status" value="1"/>
</dbReference>
<dbReference type="Pfam" id="PF01715">
    <property type="entry name" value="IPPT"/>
    <property type="match status" value="1"/>
</dbReference>
<dbReference type="SUPFAM" id="SSF52540">
    <property type="entry name" value="P-loop containing nucleoside triphosphate hydrolases"/>
    <property type="match status" value="2"/>
</dbReference>
<name>MIAA_STAAR</name>
<comment type="function">
    <text evidence="1">Catalyzes the transfer of a dimethylallyl group onto the adenine at position 37 in tRNAs that read codons beginning with uridine, leading to the formation of N6-(dimethylallyl)adenosine (i(6)A).</text>
</comment>
<comment type="catalytic activity">
    <reaction evidence="1">
        <text>adenosine(37) in tRNA + dimethylallyl diphosphate = N(6)-dimethylallyladenosine(37) in tRNA + diphosphate</text>
        <dbReference type="Rhea" id="RHEA:26482"/>
        <dbReference type="Rhea" id="RHEA-COMP:10162"/>
        <dbReference type="Rhea" id="RHEA-COMP:10375"/>
        <dbReference type="ChEBI" id="CHEBI:33019"/>
        <dbReference type="ChEBI" id="CHEBI:57623"/>
        <dbReference type="ChEBI" id="CHEBI:74411"/>
        <dbReference type="ChEBI" id="CHEBI:74415"/>
        <dbReference type="EC" id="2.5.1.75"/>
    </reaction>
</comment>
<comment type="cofactor">
    <cofactor evidence="1">
        <name>Mg(2+)</name>
        <dbReference type="ChEBI" id="CHEBI:18420"/>
    </cofactor>
</comment>
<comment type="subunit">
    <text evidence="1">Monomer.</text>
</comment>
<comment type="similarity">
    <text evidence="1">Belongs to the IPP transferase family.</text>
</comment>
<feature type="chain" id="PRO_0000163975" description="tRNA dimethylallyltransferase">
    <location>
        <begin position="1"/>
        <end position="311"/>
    </location>
</feature>
<feature type="region of interest" description="Interaction with substrate tRNA" evidence="1">
    <location>
        <begin position="38"/>
        <end position="41"/>
    </location>
</feature>
<feature type="region of interest" description="Interaction with substrate tRNA" evidence="1">
    <location>
        <begin position="166"/>
        <end position="170"/>
    </location>
</feature>
<feature type="binding site" evidence="1">
    <location>
        <begin position="13"/>
        <end position="20"/>
    </location>
    <ligand>
        <name>ATP</name>
        <dbReference type="ChEBI" id="CHEBI:30616"/>
    </ligand>
</feature>
<feature type="binding site" evidence="1">
    <location>
        <begin position="15"/>
        <end position="20"/>
    </location>
    <ligand>
        <name>substrate</name>
    </ligand>
</feature>
<feature type="site" description="Interaction with substrate tRNA" evidence="1">
    <location>
        <position position="104"/>
    </location>
</feature>
<organism>
    <name type="scientific">Staphylococcus aureus (strain MRSA252)</name>
    <dbReference type="NCBI Taxonomy" id="282458"/>
    <lineage>
        <taxon>Bacteria</taxon>
        <taxon>Bacillati</taxon>
        <taxon>Bacillota</taxon>
        <taxon>Bacilli</taxon>
        <taxon>Bacillales</taxon>
        <taxon>Staphylococcaceae</taxon>
        <taxon>Staphylococcus</taxon>
    </lineage>
</organism>
<evidence type="ECO:0000255" key="1">
    <source>
        <dbReference type="HAMAP-Rule" id="MF_00185"/>
    </source>
</evidence>
<reference key="1">
    <citation type="journal article" date="2004" name="Proc. Natl. Acad. Sci. U.S.A.">
        <title>Complete genomes of two clinical Staphylococcus aureus strains: evidence for the rapid evolution of virulence and drug resistance.</title>
        <authorList>
            <person name="Holden M.T.G."/>
            <person name="Feil E.J."/>
            <person name="Lindsay J.A."/>
            <person name="Peacock S.J."/>
            <person name="Day N.P.J."/>
            <person name="Enright M.C."/>
            <person name="Foster T.J."/>
            <person name="Moore C.E."/>
            <person name="Hurst L."/>
            <person name="Atkin R."/>
            <person name="Barron A."/>
            <person name="Bason N."/>
            <person name="Bentley S.D."/>
            <person name="Chillingworth C."/>
            <person name="Chillingworth T."/>
            <person name="Churcher C."/>
            <person name="Clark L."/>
            <person name="Corton C."/>
            <person name="Cronin A."/>
            <person name="Doggett J."/>
            <person name="Dowd L."/>
            <person name="Feltwell T."/>
            <person name="Hance Z."/>
            <person name="Harris B."/>
            <person name="Hauser H."/>
            <person name="Holroyd S."/>
            <person name="Jagels K."/>
            <person name="James K.D."/>
            <person name="Lennard N."/>
            <person name="Line A."/>
            <person name="Mayes R."/>
            <person name="Moule S."/>
            <person name="Mungall K."/>
            <person name="Ormond D."/>
            <person name="Quail M.A."/>
            <person name="Rabbinowitsch E."/>
            <person name="Rutherford K.M."/>
            <person name="Sanders M."/>
            <person name="Sharp S."/>
            <person name="Simmonds M."/>
            <person name="Stevens K."/>
            <person name="Whitehead S."/>
            <person name="Barrell B.G."/>
            <person name="Spratt B.G."/>
            <person name="Parkhill J."/>
        </authorList>
    </citation>
    <scope>NUCLEOTIDE SEQUENCE [LARGE SCALE GENOMIC DNA]</scope>
    <source>
        <strain>MRSA252</strain>
    </source>
</reference>
<keyword id="KW-0067">ATP-binding</keyword>
<keyword id="KW-0460">Magnesium</keyword>
<keyword id="KW-0547">Nucleotide-binding</keyword>
<keyword id="KW-0808">Transferase</keyword>
<keyword id="KW-0819">tRNA processing</keyword>
<gene>
    <name evidence="1" type="primary">miaA</name>
    <name type="ordered locus">SAR1278</name>
</gene>